<sequence>MSQKKVTVRQVGSPIGRKPEQRQTLQGLGLNKIGRTSELEDTPAVRGMIRKVSHLVEVVGE</sequence>
<gene>
    <name evidence="1" type="primary">rpmD</name>
    <name type="ordered locus">HNE_2833</name>
</gene>
<reference key="1">
    <citation type="journal article" date="2006" name="J. Bacteriol.">
        <title>Comparative genomic evidence for a close relationship between the dimorphic prosthecate bacteria Hyphomonas neptunium and Caulobacter crescentus.</title>
        <authorList>
            <person name="Badger J.H."/>
            <person name="Hoover T.R."/>
            <person name="Brun Y.V."/>
            <person name="Weiner R.M."/>
            <person name="Laub M.T."/>
            <person name="Alexandre G."/>
            <person name="Mrazek J."/>
            <person name="Ren Q."/>
            <person name="Paulsen I.T."/>
            <person name="Nelson K.E."/>
            <person name="Khouri H.M."/>
            <person name="Radune D."/>
            <person name="Sosa J."/>
            <person name="Dodson R.J."/>
            <person name="Sullivan S.A."/>
            <person name="Rosovitz M.J."/>
            <person name="Madupu R."/>
            <person name="Brinkac L.M."/>
            <person name="Durkin A.S."/>
            <person name="Daugherty S.C."/>
            <person name="Kothari S.P."/>
            <person name="Giglio M.G."/>
            <person name="Zhou L."/>
            <person name="Haft D.H."/>
            <person name="Selengut J.D."/>
            <person name="Davidsen T.M."/>
            <person name="Yang Q."/>
            <person name="Zafar N."/>
            <person name="Ward N.L."/>
        </authorList>
    </citation>
    <scope>NUCLEOTIDE SEQUENCE [LARGE SCALE GENOMIC DNA]</scope>
    <source>
        <strain>ATCC 15444</strain>
    </source>
</reference>
<organism>
    <name type="scientific">Hyphomonas neptunium (strain ATCC 15444)</name>
    <dbReference type="NCBI Taxonomy" id="228405"/>
    <lineage>
        <taxon>Bacteria</taxon>
        <taxon>Pseudomonadati</taxon>
        <taxon>Pseudomonadota</taxon>
        <taxon>Alphaproteobacteria</taxon>
        <taxon>Hyphomonadales</taxon>
        <taxon>Hyphomonadaceae</taxon>
        <taxon>Hyphomonas</taxon>
    </lineage>
</organism>
<evidence type="ECO:0000255" key="1">
    <source>
        <dbReference type="HAMAP-Rule" id="MF_01371"/>
    </source>
</evidence>
<evidence type="ECO:0000256" key="2">
    <source>
        <dbReference type="SAM" id="MobiDB-lite"/>
    </source>
</evidence>
<evidence type="ECO:0000305" key="3"/>
<name>RL30_HYPNA</name>
<keyword id="KW-1185">Reference proteome</keyword>
<keyword id="KW-0687">Ribonucleoprotein</keyword>
<keyword id="KW-0689">Ribosomal protein</keyword>
<proteinExistence type="inferred from homology"/>
<feature type="chain" id="PRO_0000273798" description="Large ribosomal subunit protein uL30">
    <location>
        <begin position="1"/>
        <end position="61"/>
    </location>
</feature>
<feature type="region of interest" description="Disordered" evidence="2">
    <location>
        <begin position="1"/>
        <end position="20"/>
    </location>
</feature>
<dbReference type="EMBL" id="CP000158">
    <property type="protein sequence ID" value="ABI76723.1"/>
    <property type="molecule type" value="Genomic_DNA"/>
</dbReference>
<dbReference type="RefSeq" id="WP_011647808.1">
    <property type="nucleotide sequence ID" value="NC_008358.1"/>
</dbReference>
<dbReference type="SMR" id="Q0BYD2"/>
<dbReference type="STRING" id="228405.HNE_2833"/>
<dbReference type="KEGG" id="hne:HNE_2833"/>
<dbReference type="eggNOG" id="COG1841">
    <property type="taxonomic scope" value="Bacteria"/>
</dbReference>
<dbReference type="HOGENOM" id="CLU_131047_1_2_5"/>
<dbReference type="Proteomes" id="UP000001959">
    <property type="component" value="Chromosome"/>
</dbReference>
<dbReference type="GO" id="GO:0022625">
    <property type="term" value="C:cytosolic large ribosomal subunit"/>
    <property type="evidence" value="ECO:0007669"/>
    <property type="project" value="TreeGrafter"/>
</dbReference>
<dbReference type="GO" id="GO:0003735">
    <property type="term" value="F:structural constituent of ribosome"/>
    <property type="evidence" value="ECO:0007669"/>
    <property type="project" value="InterPro"/>
</dbReference>
<dbReference type="GO" id="GO:0006412">
    <property type="term" value="P:translation"/>
    <property type="evidence" value="ECO:0007669"/>
    <property type="project" value="UniProtKB-UniRule"/>
</dbReference>
<dbReference type="CDD" id="cd01658">
    <property type="entry name" value="Ribosomal_L30"/>
    <property type="match status" value="1"/>
</dbReference>
<dbReference type="Gene3D" id="3.30.1390.20">
    <property type="entry name" value="Ribosomal protein L30, ferredoxin-like fold domain"/>
    <property type="match status" value="1"/>
</dbReference>
<dbReference type="HAMAP" id="MF_01371_B">
    <property type="entry name" value="Ribosomal_uL30_B"/>
    <property type="match status" value="1"/>
</dbReference>
<dbReference type="InterPro" id="IPR036919">
    <property type="entry name" value="Ribo_uL30_ferredoxin-like_sf"/>
</dbReference>
<dbReference type="InterPro" id="IPR005996">
    <property type="entry name" value="Ribosomal_uL30_bac-type"/>
</dbReference>
<dbReference type="InterPro" id="IPR016082">
    <property type="entry name" value="Ribosomal_uL30_ferredoxin-like"/>
</dbReference>
<dbReference type="NCBIfam" id="TIGR01308">
    <property type="entry name" value="rpmD_bact"/>
    <property type="match status" value="1"/>
</dbReference>
<dbReference type="PANTHER" id="PTHR15892:SF2">
    <property type="entry name" value="LARGE RIBOSOMAL SUBUNIT PROTEIN UL30M"/>
    <property type="match status" value="1"/>
</dbReference>
<dbReference type="PANTHER" id="PTHR15892">
    <property type="entry name" value="MITOCHONDRIAL RIBOSOMAL PROTEIN L30"/>
    <property type="match status" value="1"/>
</dbReference>
<dbReference type="Pfam" id="PF00327">
    <property type="entry name" value="Ribosomal_L30"/>
    <property type="match status" value="1"/>
</dbReference>
<dbReference type="PIRSF" id="PIRSF002211">
    <property type="entry name" value="Ribosomal_L30_bac-type"/>
    <property type="match status" value="1"/>
</dbReference>
<dbReference type="SUPFAM" id="SSF55129">
    <property type="entry name" value="Ribosomal protein L30p/L7e"/>
    <property type="match status" value="1"/>
</dbReference>
<accession>Q0BYD2</accession>
<comment type="subunit">
    <text evidence="1">Part of the 50S ribosomal subunit.</text>
</comment>
<comment type="similarity">
    <text evidence="1">Belongs to the universal ribosomal protein uL30 family.</text>
</comment>
<protein>
    <recommendedName>
        <fullName evidence="1">Large ribosomal subunit protein uL30</fullName>
    </recommendedName>
    <alternativeName>
        <fullName evidence="3">50S ribosomal protein L30</fullName>
    </alternativeName>
</protein>